<gene>
    <name evidence="1" type="primary">rplK</name>
    <name type="ordered locus">A1E_00695</name>
</gene>
<keyword id="KW-0488">Methylation</keyword>
<keyword id="KW-0687">Ribonucleoprotein</keyword>
<keyword id="KW-0689">Ribosomal protein</keyword>
<keyword id="KW-0694">RNA-binding</keyword>
<keyword id="KW-0699">rRNA-binding</keyword>
<comment type="function">
    <text evidence="1">Forms part of the ribosomal stalk which helps the ribosome interact with GTP-bound translation factors.</text>
</comment>
<comment type="subunit">
    <text evidence="1">Part of the ribosomal stalk of the 50S ribosomal subunit. Interacts with L10 and the large rRNA to form the base of the stalk. L10 forms an elongated spine to which L12 dimers bind in a sequential fashion forming a multimeric L10(L12)X complex.</text>
</comment>
<comment type="PTM">
    <text evidence="1">One or more lysine residues are methylated.</text>
</comment>
<comment type="similarity">
    <text evidence="1">Belongs to the universal ribosomal protein uL11 family.</text>
</comment>
<feature type="chain" id="PRO_1000046254" description="Large ribosomal subunit protein uL11">
    <location>
        <begin position="1"/>
        <end position="145"/>
    </location>
</feature>
<accession>A8EXK4</accession>
<proteinExistence type="inferred from homology"/>
<sequence>MSQKAIKGYINLIIPAAGATPAPPIGPALGQRKVNIAAFCKDFNDATQAMEKGIPLPTVITVYEDRSFSFKIKTSPASYFLKKYAKITKGSSATKKEAVVGKVTMDDCREIAKLKMPDLNTKNIEAATKIICGSAASMGLEVVGN</sequence>
<protein>
    <recommendedName>
        <fullName evidence="1">Large ribosomal subunit protein uL11</fullName>
    </recommendedName>
    <alternativeName>
        <fullName evidence="2">50S ribosomal protein L11</fullName>
    </alternativeName>
</protein>
<organism>
    <name type="scientific">Rickettsia canadensis (strain McKiel)</name>
    <dbReference type="NCBI Taxonomy" id="293613"/>
    <lineage>
        <taxon>Bacteria</taxon>
        <taxon>Pseudomonadati</taxon>
        <taxon>Pseudomonadota</taxon>
        <taxon>Alphaproteobacteria</taxon>
        <taxon>Rickettsiales</taxon>
        <taxon>Rickettsiaceae</taxon>
        <taxon>Rickettsieae</taxon>
        <taxon>Rickettsia</taxon>
        <taxon>belli group</taxon>
    </lineage>
</organism>
<reference key="1">
    <citation type="submission" date="2007-09" db="EMBL/GenBank/DDBJ databases">
        <title>Complete genome sequence of Rickettsia canadensis.</title>
        <authorList>
            <person name="Madan A."/>
            <person name="Fahey J."/>
            <person name="Helton E."/>
            <person name="Ketteman M."/>
            <person name="Madan A."/>
            <person name="Rodrigues S."/>
            <person name="Sanchez A."/>
            <person name="Whiting M."/>
            <person name="Dasch G."/>
            <person name="Eremeeva M."/>
        </authorList>
    </citation>
    <scope>NUCLEOTIDE SEQUENCE [LARGE SCALE GENOMIC DNA]</scope>
    <source>
        <strain>McKiel</strain>
    </source>
</reference>
<name>RL11_RICCK</name>
<dbReference type="EMBL" id="CP000409">
    <property type="protein sequence ID" value="ABV73087.1"/>
    <property type="molecule type" value="Genomic_DNA"/>
</dbReference>
<dbReference type="RefSeq" id="WP_012148288.1">
    <property type="nucleotide sequence ID" value="NC_009879.1"/>
</dbReference>
<dbReference type="SMR" id="A8EXK4"/>
<dbReference type="STRING" id="293613.A1E_00695"/>
<dbReference type="KEGG" id="rcm:A1E_00695"/>
<dbReference type="eggNOG" id="COG0080">
    <property type="taxonomic scope" value="Bacteria"/>
</dbReference>
<dbReference type="HOGENOM" id="CLU_074237_2_0_5"/>
<dbReference type="Proteomes" id="UP000007056">
    <property type="component" value="Chromosome"/>
</dbReference>
<dbReference type="GO" id="GO:0022625">
    <property type="term" value="C:cytosolic large ribosomal subunit"/>
    <property type="evidence" value="ECO:0007669"/>
    <property type="project" value="TreeGrafter"/>
</dbReference>
<dbReference type="GO" id="GO:0070180">
    <property type="term" value="F:large ribosomal subunit rRNA binding"/>
    <property type="evidence" value="ECO:0007669"/>
    <property type="project" value="UniProtKB-UniRule"/>
</dbReference>
<dbReference type="GO" id="GO:0003735">
    <property type="term" value="F:structural constituent of ribosome"/>
    <property type="evidence" value="ECO:0007669"/>
    <property type="project" value="InterPro"/>
</dbReference>
<dbReference type="GO" id="GO:0006412">
    <property type="term" value="P:translation"/>
    <property type="evidence" value="ECO:0007669"/>
    <property type="project" value="UniProtKB-UniRule"/>
</dbReference>
<dbReference type="CDD" id="cd00349">
    <property type="entry name" value="Ribosomal_L11"/>
    <property type="match status" value="1"/>
</dbReference>
<dbReference type="FunFam" id="3.30.1550.10:FF:000005">
    <property type="entry name" value="50S ribosomal protein L11"/>
    <property type="match status" value="1"/>
</dbReference>
<dbReference type="Gene3D" id="1.10.10.250">
    <property type="entry name" value="Ribosomal protein L11, C-terminal domain"/>
    <property type="match status" value="1"/>
</dbReference>
<dbReference type="Gene3D" id="3.30.1550.10">
    <property type="entry name" value="Ribosomal protein L11/L12, N-terminal domain"/>
    <property type="match status" value="1"/>
</dbReference>
<dbReference type="HAMAP" id="MF_00736">
    <property type="entry name" value="Ribosomal_uL11"/>
    <property type="match status" value="1"/>
</dbReference>
<dbReference type="InterPro" id="IPR000911">
    <property type="entry name" value="Ribosomal_uL11"/>
</dbReference>
<dbReference type="InterPro" id="IPR006519">
    <property type="entry name" value="Ribosomal_uL11_bac-typ"/>
</dbReference>
<dbReference type="InterPro" id="IPR020783">
    <property type="entry name" value="Ribosomal_uL11_C"/>
</dbReference>
<dbReference type="InterPro" id="IPR036769">
    <property type="entry name" value="Ribosomal_uL11_C_sf"/>
</dbReference>
<dbReference type="InterPro" id="IPR020785">
    <property type="entry name" value="Ribosomal_uL11_CS"/>
</dbReference>
<dbReference type="InterPro" id="IPR020784">
    <property type="entry name" value="Ribosomal_uL11_N"/>
</dbReference>
<dbReference type="InterPro" id="IPR036796">
    <property type="entry name" value="Ribosomal_uL11_N_sf"/>
</dbReference>
<dbReference type="NCBIfam" id="TIGR01632">
    <property type="entry name" value="L11_bact"/>
    <property type="match status" value="1"/>
</dbReference>
<dbReference type="PANTHER" id="PTHR11661">
    <property type="entry name" value="60S RIBOSOMAL PROTEIN L12"/>
    <property type="match status" value="1"/>
</dbReference>
<dbReference type="PANTHER" id="PTHR11661:SF1">
    <property type="entry name" value="LARGE RIBOSOMAL SUBUNIT PROTEIN UL11M"/>
    <property type="match status" value="1"/>
</dbReference>
<dbReference type="Pfam" id="PF00298">
    <property type="entry name" value="Ribosomal_L11"/>
    <property type="match status" value="1"/>
</dbReference>
<dbReference type="Pfam" id="PF03946">
    <property type="entry name" value="Ribosomal_L11_N"/>
    <property type="match status" value="1"/>
</dbReference>
<dbReference type="SMART" id="SM00649">
    <property type="entry name" value="RL11"/>
    <property type="match status" value="1"/>
</dbReference>
<dbReference type="SUPFAM" id="SSF54747">
    <property type="entry name" value="Ribosomal L11/L12e N-terminal domain"/>
    <property type="match status" value="1"/>
</dbReference>
<dbReference type="SUPFAM" id="SSF46906">
    <property type="entry name" value="Ribosomal protein L11, C-terminal domain"/>
    <property type="match status" value="1"/>
</dbReference>
<dbReference type="PROSITE" id="PS00359">
    <property type="entry name" value="RIBOSOMAL_L11"/>
    <property type="match status" value="1"/>
</dbReference>
<evidence type="ECO:0000255" key="1">
    <source>
        <dbReference type="HAMAP-Rule" id="MF_00736"/>
    </source>
</evidence>
<evidence type="ECO:0000305" key="2"/>